<evidence type="ECO:0000250" key="1"/>
<evidence type="ECO:0000305" key="2"/>
<comment type="function">
    <text evidence="1">Viral mimic of eIF-2-alpha that acts as a pseudosubstrate for EIF2AK2/PKR kinase. Inhibits therefore eIF-2-alpha phosphorylation by host EIF2AK2/PKR kinase and prevents protein synthesis shutoff (By similarity).</text>
</comment>
<comment type="subunit">
    <text evidence="1">Interacts with host PKR kinase.</text>
</comment>
<comment type="similarity">
    <text evidence="2">Belongs to the poxviridae K3 protein family.</text>
</comment>
<keyword id="KW-0945">Host-virus interaction</keyword>
<keyword id="KW-1090">Inhibition of host innate immune response by virus</keyword>
<keyword id="KW-1114">Inhibition of host interferon signaling pathway by virus</keyword>
<keyword id="KW-1102">Inhibition of host PKR by virus</keyword>
<keyword id="KW-0922">Interferon antiviral system evasion</keyword>
<keyword id="KW-0694">RNA-binding</keyword>
<keyword id="KW-0899">Viral immunoevasion</keyword>
<organismHost>
    <name type="scientific">Sus scrofa</name>
    <name type="common">Pig</name>
    <dbReference type="NCBI Taxonomy" id="9823"/>
</organismHost>
<feature type="chain" id="PRO_0000099600" description="Protein K3 homolog">
    <location>
        <begin position="1"/>
        <end position="86"/>
    </location>
</feature>
<feature type="domain" description="S1 motif">
    <location>
        <begin position="15"/>
        <end position="86"/>
    </location>
</feature>
<gene>
    <name type="ORF">C8L</name>
</gene>
<name>K3_SWPVK</name>
<organism>
    <name type="scientific">Swinepox virus (strain Kasza)</name>
    <name type="common">SWPV</name>
    <dbReference type="NCBI Taxonomy" id="10277"/>
    <lineage>
        <taxon>Viruses</taxon>
        <taxon>Varidnaviria</taxon>
        <taxon>Bamfordvirae</taxon>
        <taxon>Nucleocytoviricota</taxon>
        <taxon>Pokkesviricetes</taxon>
        <taxon>Chitovirales</taxon>
        <taxon>Poxviridae</taxon>
        <taxon>Chordopoxvirinae</taxon>
        <taxon>Suipoxvirus</taxon>
        <taxon>Swinepox virus</taxon>
    </lineage>
</organism>
<dbReference type="EMBL" id="L22013">
    <property type="protein sequence ID" value="AAC37863.1"/>
    <property type="molecule type" value="Genomic_DNA"/>
</dbReference>
<dbReference type="SMR" id="P32224"/>
<dbReference type="KEGG" id="vg:932392"/>
<dbReference type="GO" id="GO:0030414">
    <property type="term" value="F:peptidase inhibitor activity"/>
    <property type="evidence" value="ECO:0007669"/>
    <property type="project" value="InterPro"/>
</dbReference>
<dbReference type="GO" id="GO:0030291">
    <property type="term" value="F:protein serine/threonine kinase inhibitor activity"/>
    <property type="evidence" value="ECO:0007669"/>
    <property type="project" value="UniProtKB-KW"/>
</dbReference>
<dbReference type="GO" id="GO:0003723">
    <property type="term" value="F:RNA binding"/>
    <property type="evidence" value="ECO:0007669"/>
    <property type="project" value="UniProtKB-KW"/>
</dbReference>
<dbReference type="GO" id="GO:0052170">
    <property type="term" value="P:symbiont-mediated suppression of host innate immune response"/>
    <property type="evidence" value="ECO:0007669"/>
    <property type="project" value="UniProtKB-KW"/>
</dbReference>
<dbReference type="GO" id="GO:0039580">
    <property type="term" value="P:symbiont-mediated suppression of host PKR/eIFalpha signaling"/>
    <property type="evidence" value="ECO:0007669"/>
    <property type="project" value="UniProtKB-KW"/>
</dbReference>
<dbReference type="GO" id="GO:0039502">
    <property type="term" value="P:symbiont-mediated suppression of host type I interferon-mediated signaling pathway"/>
    <property type="evidence" value="ECO:0007669"/>
    <property type="project" value="UniProtKB-KW"/>
</dbReference>
<dbReference type="Gene3D" id="2.40.50.140">
    <property type="entry name" value="Nucleic acid-binding proteins"/>
    <property type="match status" value="1"/>
</dbReference>
<dbReference type="InterPro" id="IPR016397">
    <property type="entry name" value="K3-like_poxvir"/>
</dbReference>
<dbReference type="InterPro" id="IPR012340">
    <property type="entry name" value="NA-bd_OB-fold"/>
</dbReference>
<dbReference type="PIRSF" id="PIRSF003760">
    <property type="entry name" value="VAC_K3L_Serpin_prd"/>
    <property type="match status" value="1"/>
</dbReference>
<dbReference type="SUPFAM" id="SSF50249">
    <property type="entry name" value="Nucleic acid-binding proteins"/>
    <property type="match status" value="1"/>
</dbReference>
<reference key="1">
    <citation type="journal article" date="1993" name="Virology">
        <title>DNA sequence analysis of conserved and unique regions of swinepox virus: identification of genetic elements supporting phenotypic observations including a novel G protein-coupled receptor homologue.</title>
        <authorList>
            <person name="Massung R.F."/>
            <person name="Jayarama V."/>
            <person name="Moyer R.W."/>
        </authorList>
    </citation>
    <scope>NUCLEOTIDE SEQUENCE [GENOMIC DNA]</scope>
</reference>
<protein>
    <recommendedName>
        <fullName>Protein K3 homolog</fullName>
    </recommendedName>
</protein>
<sequence length="86" mass="9787">MSTMNTLAFCYGLPNINDITQGIIFVRNNIFYSYLTDYAMEACILNYINIRADKIEDLKKSLVGKTISVRVIRVDVLKGYIDVSIV</sequence>
<proteinExistence type="inferred from homology"/>
<accession>P32224</accession>